<gene>
    <name type="primary">rpl36a</name>
    <name type="synonym">rpl44</name>
</gene>
<keyword id="KW-0963">Cytoplasm</keyword>
<keyword id="KW-1185">Reference proteome</keyword>
<keyword id="KW-0687">Ribonucleoprotein</keyword>
<keyword id="KW-0689">Ribosomal protein</keyword>
<feature type="initiator methionine" description="Removed" evidence="1">
    <location>
        <position position="1"/>
    </location>
</feature>
<feature type="chain" id="PRO_0000149124" description="Large ribosomal subunit protein eL42">
    <location>
        <begin position="2"/>
        <end position="106"/>
    </location>
</feature>
<feature type="region of interest" description="Disordered" evidence="3">
    <location>
        <begin position="26"/>
        <end position="53"/>
    </location>
</feature>
<organism>
    <name type="scientific">Takifugu rubripes</name>
    <name type="common">Japanese pufferfish</name>
    <name type="synonym">Fugu rubripes</name>
    <dbReference type="NCBI Taxonomy" id="31033"/>
    <lineage>
        <taxon>Eukaryota</taxon>
        <taxon>Metazoa</taxon>
        <taxon>Chordata</taxon>
        <taxon>Craniata</taxon>
        <taxon>Vertebrata</taxon>
        <taxon>Euteleostomi</taxon>
        <taxon>Actinopterygii</taxon>
        <taxon>Neopterygii</taxon>
        <taxon>Teleostei</taxon>
        <taxon>Neoteleostei</taxon>
        <taxon>Acanthomorphata</taxon>
        <taxon>Eupercaria</taxon>
        <taxon>Tetraodontiformes</taxon>
        <taxon>Tetradontoidea</taxon>
        <taxon>Tetraodontidae</taxon>
        <taxon>Takifugu</taxon>
    </lineage>
</organism>
<evidence type="ECO:0000250" key="1"/>
<evidence type="ECO:0000250" key="2">
    <source>
        <dbReference type="UniProtKB" id="P83881"/>
    </source>
</evidence>
<evidence type="ECO:0000256" key="3">
    <source>
        <dbReference type="SAM" id="MobiDB-lite"/>
    </source>
</evidence>
<evidence type="ECO:0000305" key="4"/>
<protein>
    <recommendedName>
        <fullName evidence="4">Large ribosomal subunit protein eL42</fullName>
    </recommendedName>
    <alternativeName>
        <fullName>60S ribosomal protein L36a</fullName>
    </alternativeName>
    <alternativeName>
        <fullName>60S ribosomal protein L44</fullName>
    </alternativeName>
</protein>
<reference key="1">
    <citation type="submission" date="2001-01" db="EMBL/GenBank/DDBJ databases">
        <title>Three way comparative genomic analysis of the BTK locus between man, mouse and Fugu.</title>
        <authorList>
            <person name="Goode D."/>
            <person name="Elgar G."/>
        </authorList>
    </citation>
    <scope>NUCLEOTIDE SEQUENCE [GENOMIC DNA]</scope>
</reference>
<proteinExistence type="inferred from homology"/>
<dbReference type="EMBL" id="AJ290422">
    <property type="protein sequence ID" value="CAC44627.1"/>
    <property type="molecule type" value="Genomic_DNA"/>
</dbReference>
<dbReference type="RefSeq" id="XP_003970609.1">
    <property type="nucleotide sequence ID" value="XM_003970560.3"/>
</dbReference>
<dbReference type="SMR" id="P61486"/>
<dbReference type="FunCoup" id="P61486">
    <property type="interactions" value="1217"/>
</dbReference>
<dbReference type="STRING" id="31033.ENSTRUP00000078404"/>
<dbReference type="GeneID" id="101061283"/>
<dbReference type="KEGG" id="tru:101061283"/>
<dbReference type="CTD" id="6173"/>
<dbReference type="eggNOG" id="KOG3464">
    <property type="taxonomic scope" value="Eukaryota"/>
</dbReference>
<dbReference type="InParanoid" id="P61486"/>
<dbReference type="OrthoDB" id="2967263at2759"/>
<dbReference type="Proteomes" id="UP000005226">
    <property type="component" value="Unplaced"/>
</dbReference>
<dbReference type="GO" id="GO:0005737">
    <property type="term" value="C:cytoplasm"/>
    <property type="evidence" value="ECO:0007669"/>
    <property type="project" value="UniProtKB-SubCell"/>
</dbReference>
<dbReference type="GO" id="GO:1990904">
    <property type="term" value="C:ribonucleoprotein complex"/>
    <property type="evidence" value="ECO:0007669"/>
    <property type="project" value="UniProtKB-KW"/>
</dbReference>
<dbReference type="GO" id="GO:0005840">
    <property type="term" value="C:ribosome"/>
    <property type="evidence" value="ECO:0007669"/>
    <property type="project" value="UniProtKB-KW"/>
</dbReference>
<dbReference type="GO" id="GO:0003735">
    <property type="term" value="F:structural constituent of ribosome"/>
    <property type="evidence" value="ECO:0007669"/>
    <property type="project" value="InterPro"/>
</dbReference>
<dbReference type="GO" id="GO:0006412">
    <property type="term" value="P:translation"/>
    <property type="evidence" value="ECO:0007669"/>
    <property type="project" value="InterPro"/>
</dbReference>
<dbReference type="FunFam" id="3.10.450.80:FF:000001">
    <property type="entry name" value="60S ribosomal protein L44"/>
    <property type="match status" value="1"/>
</dbReference>
<dbReference type="Gene3D" id="3.10.450.80">
    <property type="match status" value="1"/>
</dbReference>
<dbReference type="InterPro" id="IPR000552">
    <property type="entry name" value="Ribosomal_eL44"/>
</dbReference>
<dbReference type="InterPro" id="IPR053708">
    <property type="entry name" value="Ribosomal_LSU_eL42"/>
</dbReference>
<dbReference type="InterPro" id="IPR011332">
    <property type="entry name" value="Ribosomal_zn-bd"/>
</dbReference>
<dbReference type="PANTHER" id="PTHR10369">
    <property type="entry name" value="60S RIBOSOMAL PROTEIN L36A/L44"/>
    <property type="match status" value="1"/>
</dbReference>
<dbReference type="Pfam" id="PF00935">
    <property type="entry name" value="Ribosomal_L44"/>
    <property type="match status" value="1"/>
</dbReference>
<dbReference type="SUPFAM" id="SSF57829">
    <property type="entry name" value="Zn-binding ribosomal proteins"/>
    <property type="match status" value="1"/>
</dbReference>
<dbReference type="PROSITE" id="PS01172">
    <property type="entry name" value="RIBOSOMAL_L44E"/>
    <property type="match status" value="1"/>
</dbReference>
<sequence>MVNVPKTRRTYCKKCKKHQPHKVTQYKKGKDSLYAQGKRRYDRKQSGYGGQTKPIFRKKAKTTKKIVLRLECVEPNCRSKRMLAIKRCKHFELGGDKKRKGQVIQF</sequence>
<name>RL36A_TAKRU</name>
<accession>P61486</accession>
<accession>Q90VX4</accession>
<comment type="function">
    <text evidence="2">Component of the large ribosomal subunit. The ribosome is a large ribonucleoprotein complex responsible for the synthesis of proteins in the cell.</text>
</comment>
<comment type="subunit">
    <text evidence="2">Component of the large ribosomal subunit.</text>
</comment>
<comment type="subcellular location">
    <subcellularLocation>
        <location evidence="2">Cytoplasm</location>
    </subcellularLocation>
</comment>
<comment type="similarity">
    <text evidence="4">Belongs to the eukaryotic ribosomal protein eL42 family.</text>
</comment>